<evidence type="ECO:0000250" key="1">
    <source>
        <dbReference type="UniProtKB" id="Q9BXR0"/>
    </source>
</evidence>
<evidence type="ECO:0000255" key="2">
    <source>
        <dbReference type="HAMAP-Rule" id="MF_03218"/>
    </source>
</evidence>
<evidence type="ECO:0000269" key="3">
    <source>
    </source>
</evidence>
<evidence type="ECO:0000269" key="4">
    <source>
    </source>
</evidence>
<evidence type="ECO:0000269" key="5">
    <source>
    </source>
</evidence>
<evidence type="ECO:0000269" key="6">
    <source>
    </source>
</evidence>
<evidence type="ECO:0000305" key="7"/>
<evidence type="ECO:0000305" key="8">
    <source>
    </source>
</evidence>
<evidence type="ECO:0007744" key="9">
    <source>
        <dbReference type="PDB" id="6H62"/>
    </source>
</evidence>
<evidence type="ECO:0007744" key="10">
    <source>
        <dbReference type="PDB" id="7B2I"/>
    </source>
</evidence>
<evidence type="ECO:0007744" key="11">
    <source>
        <dbReference type="PDB" id="7OV9"/>
    </source>
</evidence>
<evidence type="ECO:0007744" key="12">
    <source>
        <dbReference type="PDB" id="7OVO"/>
    </source>
</evidence>
<evidence type="ECO:0007744" key="13">
    <source>
        <dbReference type="PDB" id="7OVS"/>
    </source>
</evidence>
<evidence type="ECO:0007744" key="14">
    <source>
        <dbReference type="PDB" id="7OWZ"/>
    </source>
</evidence>
<evidence type="ECO:0007829" key="15">
    <source>
        <dbReference type="PDB" id="7B2I"/>
    </source>
</evidence>
<evidence type="ECO:0007829" key="16">
    <source>
        <dbReference type="PDB" id="7OVS"/>
    </source>
</evidence>
<keyword id="KW-0002">3D-structure</keyword>
<keyword id="KW-0007">Acetylation</keyword>
<keyword id="KW-0963">Cytoplasm</keyword>
<keyword id="KW-0328">Glycosyltransferase</keyword>
<keyword id="KW-0472">Membrane</keyword>
<keyword id="KW-0479">Metal-binding</keyword>
<keyword id="KW-0496">Mitochondrion</keyword>
<keyword id="KW-1000">Mitochondrion outer membrane</keyword>
<keyword id="KW-0539">Nucleus</keyword>
<keyword id="KW-0597">Phosphoprotein</keyword>
<keyword id="KW-1185">Reference proteome</keyword>
<keyword id="KW-0808">Transferase</keyword>
<keyword id="KW-0819">tRNA processing</keyword>
<keyword id="KW-0862">Zinc</keyword>
<feature type="initiator methionine" description="Removed" evidence="1">
    <location>
        <position position="1"/>
    </location>
</feature>
<feature type="chain" id="PRO_0000135566" description="Queuine tRNA-ribosyltransferase catalytic subunit 1">
    <location>
        <begin position="2"/>
        <end position="403"/>
    </location>
</feature>
<feature type="region of interest" description="RNA binding" evidence="2">
    <location>
        <begin position="260"/>
        <end position="266"/>
    </location>
</feature>
<feature type="region of interest" description="RNA binding; important for wobble base 34 recognition" evidence="2">
    <location>
        <begin position="284"/>
        <end position="288"/>
    </location>
</feature>
<feature type="active site" description="Proton acceptor" evidence="2">
    <location>
        <position position="105"/>
    </location>
</feature>
<feature type="active site" description="Nucleophile" evidence="2">
    <location>
        <position position="279"/>
    </location>
</feature>
<feature type="binding site" evidence="2">
    <location>
        <begin position="105"/>
        <end position="109"/>
    </location>
    <ligand>
        <name>queuine</name>
        <dbReference type="ChEBI" id="CHEBI:17433"/>
    </ligand>
</feature>
<feature type="binding site" evidence="2 5 12 14">
    <location>
        <position position="159"/>
    </location>
    <ligand>
        <name>queuine</name>
        <dbReference type="ChEBI" id="CHEBI:17433"/>
    </ligand>
</feature>
<feature type="binding site" evidence="2 5 12 14">
    <location>
        <position position="202"/>
    </location>
    <ligand>
        <name>queuine</name>
        <dbReference type="ChEBI" id="CHEBI:17433"/>
    </ligand>
</feature>
<feature type="binding site" evidence="2 5 12 14">
    <location>
        <position position="229"/>
    </location>
    <ligand>
        <name>queuine</name>
        <dbReference type="ChEBI" id="CHEBI:17433"/>
    </ligand>
</feature>
<feature type="binding site" evidence="2 5 9 10 11 12 13 14">
    <location>
        <position position="317"/>
    </location>
    <ligand>
        <name>Zn(2+)</name>
        <dbReference type="ChEBI" id="CHEBI:29105"/>
    </ligand>
</feature>
<feature type="binding site" evidence="2 5 9 10 11 12 13 14">
    <location>
        <position position="319"/>
    </location>
    <ligand>
        <name>Zn(2+)</name>
        <dbReference type="ChEBI" id="CHEBI:29105"/>
    </ligand>
</feature>
<feature type="binding site" evidence="2 5 9 10 11 12 13 14">
    <location>
        <position position="322"/>
    </location>
    <ligand>
        <name>Zn(2+)</name>
        <dbReference type="ChEBI" id="CHEBI:29105"/>
    </ligand>
</feature>
<feature type="binding site" evidence="2 5 9 10 11 12 13 14">
    <location>
        <position position="348"/>
    </location>
    <ligand>
        <name>Zn(2+)</name>
        <dbReference type="ChEBI" id="CHEBI:29105"/>
    </ligand>
</feature>
<feature type="modified residue" description="N-acetylalanine" evidence="1">
    <location>
        <position position="2"/>
    </location>
</feature>
<feature type="modified residue" description="Phosphoserine" evidence="1">
    <location>
        <position position="139"/>
    </location>
</feature>
<feature type="strand" evidence="15">
    <location>
        <begin position="16"/>
        <end position="22"/>
    </location>
</feature>
<feature type="turn" evidence="15">
    <location>
        <begin position="24"/>
        <end position="26"/>
    </location>
</feature>
<feature type="strand" evidence="15">
    <location>
        <begin position="29"/>
        <end position="35"/>
    </location>
</feature>
<feature type="strand" evidence="15">
    <location>
        <begin position="38"/>
        <end position="45"/>
    </location>
</feature>
<feature type="helix" evidence="15">
    <location>
        <begin position="49"/>
        <end position="54"/>
    </location>
</feature>
<feature type="helix" evidence="15">
    <location>
        <begin position="59"/>
        <end position="64"/>
    </location>
</feature>
<feature type="strand" evidence="15">
    <location>
        <begin position="69"/>
        <end position="72"/>
    </location>
</feature>
<feature type="helix" evidence="15">
    <location>
        <begin position="74"/>
        <end position="79"/>
    </location>
</feature>
<feature type="helix" evidence="15">
    <location>
        <begin position="83"/>
        <end position="88"/>
    </location>
</feature>
<feature type="helix" evidence="15">
    <location>
        <begin position="92"/>
        <end position="95"/>
    </location>
</feature>
<feature type="strand" evidence="15">
    <location>
        <begin position="100"/>
        <end position="104"/>
    </location>
</feature>
<feature type="strand" evidence="15">
    <location>
        <begin position="107"/>
        <end position="109"/>
    </location>
</feature>
<feature type="helix" evidence="15">
    <location>
        <begin position="114"/>
        <end position="116"/>
    </location>
</feature>
<feature type="strand" evidence="16">
    <location>
        <begin position="118"/>
        <end position="120"/>
    </location>
</feature>
<feature type="strand" evidence="15">
    <location>
        <begin position="124"/>
        <end position="127"/>
    </location>
</feature>
<feature type="helix" evidence="15">
    <location>
        <begin position="130"/>
        <end position="132"/>
    </location>
</feature>
<feature type="strand" evidence="15">
    <location>
        <begin position="136"/>
        <end position="138"/>
    </location>
</feature>
<feature type="helix" evidence="15">
    <location>
        <begin position="140"/>
        <end position="150"/>
    </location>
</feature>
<feature type="strand" evidence="15">
    <location>
        <begin position="153"/>
        <end position="156"/>
    </location>
</feature>
<feature type="helix" evidence="15">
    <location>
        <begin position="169"/>
        <end position="188"/>
    </location>
</feature>
<feature type="turn" evidence="15">
    <location>
        <begin position="192"/>
        <end position="194"/>
    </location>
</feature>
<feature type="strand" evidence="15">
    <location>
        <begin position="195"/>
        <end position="201"/>
    </location>
</feature>
<feature type="helix" evidence="15">
    <location>
        <begin position="207"/>
        <end position="217"/>
    </location>
</feature>
<feature type="strand" evidence="15">
    <location>
        <begin position="223"/>
        <end position="227"/>
    </location>
</feature>
<feature type="strand" evidence="15">
    <location>
        <begin position="231"/>
        <end position="234"/>
    </location>
</feature>
<feature type="helix" evidence="15">
    <location>
        <begin position="236"/>
        <end position="249"/>
    </location>
</feature>
<feature type="strand" evidence="15">
    <location>
        <begin position="256"/>
        <end position="258"/>
    </location>
</feature>
<feature type="helix" evidence="15">
    <location>
        <begin position="264"/>
        <end position="273"/>
    </location>
</feature>
<feature type="strand" evidence="16">
    <location>
        <begin position="277"/>
        <end position="279"/>
    </location>
</feature>
<feature type="helix" evidence="15">
    <location>
        <begin position="282"/>
        <end position="285"/>
    </location>
</feature>
<feature type="helix" evidence="15">
    <location>
        <begin position="286"/>
        <end position="289"/>
    </location>
</feature>
<feature type="strand" evidence="15">
    <location>
        <begin position="291"/>
        <end position="294"/>
    </location>
</feature>
<feature type="strand" evidence="15">
    <location>
        <begin position="297"/>
        <end position="300"/>
    </location>
</feature>
<feature type="helix" evidence="15">
    <location>
        <begin position="304"/>
        <end position="306"/>
    </location>
</feature>
<feature type="helix" evidence="15">
    <location>
        <begin position="320"/>
        <end position="324"/>
    </location>
</feature>
<feature type="helix" evidence="15">
    <location>
        <begin position="327"/>
        <end position="336"/>
    </location>
</feature>
<feature type="helix" evidence="15">
    <location>
        <begin position="338"/>
        <end position="365"/>
    </location>
</feature>
<feature type="helix" evidence="15">
    <location>
        <begin position="369"/>
        <end position="381"/>
    </location>
</feature>
<feature type="helix" evidence="15">
    <location>
        <begin position="384"/>
        <end position="386"/>
    </location>
</feature>
<feature type="helix" evidence="15">
    <location>
        <begin position="389"/>
        <end position="397"/>
    </location>
</feature>
<sequence length="403" mass="44093">MAAVGSPGSLESAPRIMRLVAECSRSGARAGELRLPHGTVATPVFMPVGTQATMKGITTEQLDSLGCRICLGNTYHLGLRPGPELIRKAQGLHGFMNWPHNLLTDSGGFQMVSLFSLSEVTEEGVHFRSPYDGEETLLSPERSVEIQNALGSDIIMQLDHVVSSTVTGPLVEEAMHRSVRWLDRCIAAHKHPDKQNLFAIIQGGLNADLRTTCLKEMTKRDVPGFAIGGLSGGESKAQFWKMVALSTSMLPKDKPRYLMGVGYATDLVVCVALGCDMFDCVYPTRTARFGSALVPTGNLQLKKKQYAKDFSPINPECPCPTCQTHSRAFLHALLHSDNTTALHHLTVHNIAYQLQLLSAVRSSILEQRFPDFVRNFMRTMYGDHSLCPAWAVEALASVGIMLT</sequence>
<accession>Q9JMA2</accession>
<accession>Q80VS3</accession>
<comment type="function">
    <text evidence="2 3 4 5 6">Catalytic subunit of the queuine tRNA-ribosyltransferase (TGT) that catalyzes the base-exchange of a guanine (G) residue with queuine (Q) at position 34 (anticodon wobble position) in tRNAs with GU(N) anticodons (tRNA-Asp, -Asn, -His and -Tyr), resulting in the hypermodified nucleoside queuosine (7-(((4,5-cis-dihydroxy-2-cyclopenten-1-yl)amino)methyl)-7-deazaguanosine) (PubMed:19414587, PubMed:29862811, PubMed:35815944, PubMed:37609797). Catalysis occurs through a double-displacement mechanism. The nucleophile active site attacks the C1' of nucleotide 34 to detach the guanine base from the RNA, forming a covalent enzyme-RNA intermediate. The proton acceptor active site deprotonates the incoming queuine, allowing a nucleophilic attack on the C1' of the ribose to form the product (By similarity). Modification of cytoplasmic tRNAs with queuosine controls the elongation speed of cognate codons, thereby ensuring the correct folding of nascent proteins to maintain proteome integrity (PubMed:37609797).</text>
</comment>
<comment type="catalytic activity">
    <reaction evidence="2 3 4 5">
        <text>guanosine(34) in tRNA + queuine = queuosine(34) in tRNA + guanine</text>
        <dbReference type="Rhea" id="RHEA:16633"/>
        <dbReference type="Rhea" id="RHEA-COMP:10341"/>
        <dbReference type="Rhea" id="RHEA-COMP:18571"/>
        <dbReference type="ChEBI" id="CHEBI:16235"/>
        <dbReference type="ChEBI" id="CHEBI:17433"/>
        <dbReference type="ChEBI" id="CHEBI:74269"/>
        <dbReference type="ChEBI" id="CHEBI:194431"/>
        <dbReference type="EC" id="2.4.2.64"/>
    </reaction>
</comment>
<comment type="cofactor">
    <cofactor evidence="2 5">
        <name>Zn(2+)</name>
        <dbReference type="ChEBI" id="CHEBI:29105"/>
    </cofactor>
</comment>
<comment type="biophysicochemical properties">
    <kinetics>
        <KM evidence="5">0.44 uM for tRNA(Tyr)</KM>
        <text evidence="5">kcat is 0.0065 sec(-1) with tRNA(Tyr) as substrate.</text>
    </kinetics>
</comment>
<comment type="subunit">
    <text evidence="2 3 4 5">Heterodimer of a catalytic subunit QTRT1 and an accessory subunit QTRT2.</text>
</comment>
<comment type="subcellular location">
    <subcellularLocation>
        <location evidence="2 3">Cytoplasm</location>
    </subcellularLocation>
    <subcellularLocation>
        <location evidence="2 3">Mitochondrion outer membrane</location>
        <topology evidence="2 8">Peripheral membrane protein</topology>
        <orientation evidence="2 3">Cytoplasmic side</orientation>
    </subcellularLocation>
    <subcellularLocation>
        <location evidence="3">Nucleus</location>
    </subcellularLocation>
    <text evidence="2 3">Weakly associates with mitochondria, possibly via QTRT2.</text>
</comment>
<comment type="tissue specificity">
    <text evidence="3">Expressed in brain, heart, kidney, liver, ling, skeletal muscle, spleen and testis.</text>
</comment>
<comment type="disruption phenotype">
    <text evidence="6">Mice are viable and fertile but display cognitive defects, characterized by learning and memory deficits (PubMed:37609797). Female mice are more severely affected than males (PubMed:37609797). In the hippocampus, stalling of ribosomes on queuosine(34)-decoded codons is observed, as well as a global imbalance in translation elongation speed between codons that engage in weak and strong interactions with their cognate anticodons (PubMed:37609797).</text>
</comment>
<comment type="similarity">
    <text evidence="2">Belongs to the queuine tRNA-ribosyltransferase family.</text>
</comment>
<comment type="sequence caution" evidence="7">
    <conflict type="erroneous initiation">
        <sequence resource="EMBL-CDS" id="BAB27717"/>
    </conflict>
    <text>Truncated N-terminus.</text>
</comment>
<comment type="sequence caution" evidence="7">
    <conflict type="frameshift">
        <sequence resource="EMBL-CDS" id="BAB27717"/>
    </conflict>
</comment>
<protein>
    <recommendedName>
        <fullName evidence="2">Queuine tRNA-ribosyltransferase catalytic subunit 1</fullName>
        <ecNumber evidence="2 3 4">2.4.2.64</ecNumber>
    </recommendedName>
    <alternativeName>
        <fullName evidence="2">Guanine insertion enzyme</fullName>
    </alternativeName>
    <alternativeName>
        <fullName evidence="2">tRNA-guanine transglycosylase</fullName>
    </alternativeName>
</protein>
<organism>
    <name type="scientific">Mus musculus</name>
    <name type="common">Mouse</name>
    <dbReference type="NCBI Taxonomy" id="10090"/>
    <lineage>
        <taxon>Eukaryota</taxon>
        <taxon>Metazoa</taxon>
        <taxon>Chordata</taxon>
        <taxon>Craniata</taxon>
        <taxon>Vertebrata</taxon>
        <taxon>Euteleostomi</taxon>
        <taxon>Mammalia</taxon>
        <taxon>Eutheria</taxon>
        <taxon>Euarchontoglires</taxon>
        <taxon>Glires</taxon>
        <taxon>Rodentia</taxon>
        <taxon>Myomorpha</taxon>
        <taxon>Muroidea</taxon>
        <taxon>Muridae</taxon>
        <taxon>Murinae</taxon>
        <taxon>Mus</taxon>
        <taxon>Mus</taxon>
    </lineage>
</organism>
<dbReference type="EC" id="2.4.2.64" evidence="2 3 4"/>
<dbReference type="EMBL" id="AK011586">
    <property type="protein sequence ID" value="BAB27717.1"/>
    <property type="status" value="ALT_SEQ"/>
    <property type="molecule type" value="mRNA"/>
</dbReference>
<dbReference type="EMBL" id="BC044811">
    <property type="protein sequence ID" value="AAH44811.1"/>
    <property type="molecule type" value="mRNA"/>
</dbReference>
<dbReference type="EMBL" id="AB034632">
    <property type="protein sequence ID" value="BAA93550.1"/>
    <property type="molecule type" value="mRNA"/>
</dbReference>
<dbReference type="CCDS" id="CCDS52735.1"/>
<dbReference type="RefSeq" id="NP_068688.2">
    <property type="nucleotide sequence ID" value="NM_021888.2"/>
</dbReference>
<dbReference type="PDB" id="6H62">
    <property type="method" value="X-ray"/>
    <property type="resolution" value="2.68 A"/>
    <property type="chains" value="A/B=1-403"/>
</dbReference>
<dbReference type="PDB" id="7B2I">
    <property type="method" value="X-ray"/>
    <property type="resolution" value="1.65 A"/>
    <property type="chains" value="C=11-403"/>
</dbReference>
<dbReference type="PDB" id="7OV9">
    <property type="method" value="X-ray"/>
    <property type="resolution" value="1.90 A"/>
    <property type="chains" value="C=11-403"/>
</dbReference>
<dbReference type="PDB" id="7OVO">
    <property type="method" value="X-ray"/>
    <property type="resolution" value="2.10 A"/>
    <property type="chains" value="C=11-403"/>
</dbReference>
<dbReference type="PDB" id="7OVS">
    <property type="method" value="X-ray"/>
    <property type="resolution" value="2.60 A"/>
    <property type="chains" value="C=11-403"/>
</dbReference>
<dbReference type="PDB" id="7OWZ">
    <property type="method" value="X-ray"/>
    <property type="resolution" value="2.60 A"/>
    <property type="chains" value="C=11-403"/>
</dbReference>
<dbReference type="PDBsum" id="6H62"/>
<dbReference type="PDBsum" id="7B2I"/>
<dbReference type="PDBsum" id="7OV9"/>
<dbReference type="PDBsum" id="7OVO"/>
<dbReference type="PDBsum" id="7OVS"/>
<dbReference type="PDBsum" id="7OWZ"/>
<dbReference type="SMR" id="Q9JMA2"/>
<dbReference type="BioGRID" id="208581">
    <property type="interactions" value="1"/>
</dbReference>
<dbReference type="FunCoup" id="Q9JMA2">
    <property type="interactions" value="1982"/>
</dbReference>
<dbReference type="IntAct" id="Q9JMA2">
    <property type="interactions" value="1"/>
</dbReference>
<dbReference type="STRING" id="10090.ENSMUSP00000002902"/>
<dbReference type="iPTMnet" id="Q9JMA2"/>
<dbReference type="PhosphoSitePlus" id="Q9JMA2"/>
<dbReference type="SwissPalm" id="Q9JMA2"/>
<dbReference type="PaxDb" id="10090-ENSMUSP00000002902"/>
<dbReference type="PeptideAtlas" id="Q9JMA2"/>
<dbReference type="ProteomicsDB" id="263171"/>
<dbReference type="Pumba" id="Q9JMA2"/>
<dbReference type="Antibodypedia" id="25490">
    <property type="antibodies" value="150 antibodies from 19 providers"/>
</dbReference>
<dbReference type="DNASU" id="60507"/>
<dbReference type="Ensembl" id="ENSMUST00000002902.8">
    <property type="protein sequence ID" value="ENSMUSP00000002902.7"/>
    <property type="gene ID" value="ENSMUSG00000002825.9"/>
</dbReference>
<dbReference type="GeneID" id="60507"/>
<dbReference type="KEGG" id="mmu:60507"/>
<dbReference type="UCSC" id="uc009oli.2">
    <property type="organism name" value="mouse"/>
</dbReference>
<dbReference type="AGR" id="MGI:1931441"/>
<dbReference type="CTD" id="81890"/>
<dbReference type="MGI" id="MGI:1931441">
    <property type="gene designation" value="Qtrt1"/>
</dbReference>
<dbReference type="VEuPathDB" id="HostDB:ENSMUSG00000002825"/>
<dbReference type="eggNOG" id="KOG3908">
    <property type="taxonomic scope" value="Eukaryota"/>
</dbReference>
<dbReference type="GeneTree" id="ENSGT00530000063679"/>
<dbReference type="HOGENOM" id="CLU_022060_1_0_1"/>
<dbReference type="InParanoid" id="Q9JMA2"/>
<dbReference type="OMA" id="IDLFDCV"/>
<dbReference type="OrthoDB" id="10249838at2759"/>
<dbReference type="PhylomeDB" id="Q9JMA2"/>
<dbReference type="TreeFam" id="TF300732"/>
<dbReference type="BRENDA" id="2.4.2.64">
    <property type="organism ID" value="3474"/>
</dbReference>
<dbReference type="BioGRID-ORCS" id="60507">
    <property type="hits" value="4 hits in 79 CRISPR screens"/>
</dbReference>
<dbReference type="PRO" id="PR:Q9JMA2"/>
<dbReference type="Proteomes" id="UP000000589">
    <property type="component" value="Chromosome 9"/>
</dbReference>
<dbReference type="RNAct" id="Q9JMA2">
    <property type="molecule type" value="protein"/>
</dbReference>
<dbReference type="Bgee" id="ENSMUSG00000002825">
    <property type="expression patterns" value="Expressed in dorsal pancreas and 254 other cell types or tissues"/>
</dbReference>
<dbReference type="ExpressionAtlas" id="Q9JMA2">
    <property type="expression patterns" value="baseline and differential"/>
</dbReference>
<dbReference type="GO" id="GO:0005737">
    <property type="term" value="C:cytoplasm"/>
    <property type="evidence" value="ECO:0000314"/>
    <property type="project" value="UniProtKB"/>
</dbReference>
<dbReference type="GO" id="GO:0032473">
    <property type="term" value="C:cytoplasmic side of mitochondrial outer membrane"/>
    <property type="evidence" value="ECO:0000314"/>
    <property type="project" value="FlyBase"/>
</dbReference>
<dbReference type="GO" id="GO:0005634">
    <property type="term" value="C:nucleus"/>
    <property type="evidence" value="ECO:0000314"/>
    <property type="project" value="UniProtKB"/>
</dbReference>
<dbReference type="GO" id="GO:0032991">
    <property type="term" value="C:protein-containing complex"/>
    <property type="evidence" value="ECO:0000353"/>
    <property type="project" value="UniProtKB"/>
</dbReference>
<dbReference type="GO" id="GO:0120507">
    <property type="term" value="C:tRNA-guanine transglycosylase complex"/>
    <property type="evidence" value="ECO:0007669"/>
    <property type="project" value="Ensembl"/>
</dbReference>
<dbReference type="GO" id="GO:0046872">
    <property type="term" value="F:metal ion binding"/>
    <property type="evidence" value="ECO:0007669"/>
    <property type="project" value="UniProtKB-KW"/>
</dbReference>
<dbReference type="GO" id="GO:0046982">
    <property type="term" value="F:protein heterodimerization activity"/>
    <property type="evidence" value="ECO:0000250"/>
    <property type="project" value="UniProtKB"/>
</dbReference>
<dbReference type="GO" id="GO:0042803">
    <property type="term" value="F:protein homodimerization activity"/>
    <property type="evidence" value="ECO:0000250"/>
    <property type="project" value="UniProtKB"/>
</dbReference>
<dbReference type="GO" id="GO:0008479">
    <property type="term" value="F:tRNA-guanosine(34) queuine transglycosylase activity"/>
    <property type="evidence" value="ECO:0000314"/>
    <property type="project" value="UniProtKB"/>
</dbReference>
<dbReference type="GO" id="GO:0101030">
    <property type="term" value="P:tRNA-guanine transglycosylation"/>
    <property type="evidence" value="ECO:0000314"/>
    <property type="project" value="UniProtKB"/>
</dbReference>
<dbReference type="FunFam" id="3.20.20.105:FF:000001">
    <property type="entry name" value="Queuine tRNA-ribosyltransferase"/>
    <property type="match status" value="1"/>
</dbReference>
<dbReference type="Gene3D" id="3.20.20.105">
    <property type="entry name" value="Queuine tRNA-ribosyltransferase-like"/>
    <property type="match status" value="1"/>
</dbReference>
<dbReference type="HAMAP" id="MF_00168">
    <property type="entry name" value="Q_tRNA_Tgt"/>
    <property type="match status" value="1"/>
</dbReference>
<dbReference type="InterPro" id="IPR004803">
    <property type="entry name" value="TGT"/>
</dbReference>
<dbReference type="InterPro" id="IPR036511">
    <property type="entry name" value="TGT-like_sf"/>
</dbReference>
<dbReference type="InterPro" id="IPR002616">
    <property type="entry name" value="tRNA_ribo_trans-like"/>
</dbReference>
<dbReference type="NCBIfam" id="TIGR00430">
    <property type="entry name" value="Q_tRNA_tgt"/>
    <property type="match status" value="1"/>
</dbReference>
<dbReference type="NCBIfam" id="TIGR00449">
    <property type="entry name" value="tgt_general"/>
    <property type="match status" value="1"/>
</dbReference>
<dbReference type="PANTHER" id="PTHR43530">
    <property type="entry name" value="QUEUINE TRNA-RIBOSYLTRANSFERASE CATALYTIC SUBUNIT 1"/>
    <property type="match status" value="1"/>
</dbReference>
<dbReference type="PANTHER" id="PTHR43530:SF1">
    <property type="entry name" value="QUEUINE TRNA-RIBOSYLTRANSFERASE CATALYTIC SUBUNIT 1"/>
    <property type="match status" value="1"/>
</dbReference>
<dbReference type="Pfam" id="PF01702">
    <property type="entry name" value="TGT"/>
    <property type="match status" value="1"/>
</dbReference>
<dbReference type="SUPFAM" id="SSF51713">
    <property type="entry name" value="tRNA-guanine transglycosylase"/>
    <property type="match status" value="1"/>
</dbReference>
<proteinExistence type="evidence at protein level"/>
<gene>
    <name evidence="2" type="primary">Qtrt1</name>
    <name type="synonym">Tgt</name>
    <name type="synonym">Tgut</name>
</gene>
<name>TGT_MOUSE</name>
<reference key="1">
    <citation type="journal article" date="2005" name="Science">
        <title>The transcriptional landscape of the mammalian genome.</title>
        <authorList>
            <person name="Carninci P."/>
            <person name="Kasukawa T."/>
            <person name="Katayama S."/>
            <person name="Gough J."/>
            <person name="Frith M.C."/>
            <person name="Maeda N."/>
            <person name="Oyama R."/>
            <person name="Ravasi T."/>
            <person name="Lenhard B."/>
            <person name="Wells C."/>
            <person name="Kodzius R."/>
            <person name="Shimokawa K."/>
            <person name="Bajic V.B."/>
            <person name="Brenner S.E."/>
            <person name="Batalov S."/>
            <person name="Forrest A.R."/>
            <person name="Zavolan M."/>
            <person name="Davis M.J."/>
            <person name="Wilming L.G."/>
            <person name="Aidinis V."/>
            <person name="Allen J.E."/>
            <person name="Ambesi-Impiombato A."/>
            <person name="Apweiler R."/>
            <person name="Aturaliya R.N."/>
            <person name="Bailey T.L."/>
            <person name="Bansal M."/>
            <person name="Baxter L."/>
            <person name="Beisel K.W."/>
            <person name="Bersano T."/>
            <person name="Bono H."/>
            <person name="Chalk A.M."/>
            <person name="Chiu K.P."/>
            <person name="Choudhary V."/>
            <person name="Christoffels A."/>
            <person name="Clutterbuck D.R."/>
            <person name="Crowe M.L."/>
            <person name="Dalla E."/>
            <person name="Dalrymple B.P."/>
            <person name="de Bono B."/>
            <person name="Della Gatta G."/>
            <person name="di Bernardo D."/>
            <person name="Down T."/>
            <person name="Engstrom P."/>
            <person name="Fagiolini M."/>
            <person name="Faulkner G."/>
            <person name="Fletcher C.F."/>
            <person name="Fukushima T."/>
            <person name="Furuno M."/>
            <person name="Futaki S."/>
            <person name="Gariboldi M."/>
            <person name="Georgii-Hemming P."/>
            <person name="Gingeras T.R."/>
            <person name="Gojobori T."/>
            <person name="Green R.E."/>
            <person name="Gustincich S."/>
            <person name="Harbers M."/>
            <person name="Hayashi Y."/>
            <person name="Hensch T.K."/>
            <person name="Hirokawa N."/>
            <person name="Hill D."/>
            <person name="Huminiecki L."/>
            <person name="Iacono M."/>
            <person name="Ikeo K."/>
            <person name="Iwama A."/>
            <person name="Ishikawa T."/>
            <person name="Jakt M."/>
            <person name="Kanapin A."/>
            <person name="Katoh M."/>
            <person name="Kawasawa Y."/>
            <person name="Kelso J."/>
            <person name="Kitamura H."/>
            <person name="Kitano H."/>
            <person name="Kollias G."/>
            <person name="Krishnan S.P."/>
            <person name="Kruger A."/>
            <person name="Kummerfeld S.K."/>
            <person name="Kurochkin I.V."/>
            <person name="Lareau L.F."/>
            <person name="Lazarevic D."/>
            <person name="Lipovich L."/>
            <person name="Liu J."/>
            <person name="Liuni S."/>
            <person name="McWilliam S."/>
            <person name="Madan Babu M."/>
            <person name="Madera M."/>
            <person name="Marchionni L."/>
            <person name="Matsuda H."/>
            <person name="Matsuzawa S."/>
            <person name="Miki H."/>
            <person name="Mignone F."/>
            <person name="Miyake S."/>
            <person name="Morris K."/>
            <person name="Mottagui-Tabar S."/>
            <person name="Mulder N."/>
            <person name="Nakano N."/>
            <person name="Nakauchi H."/>
            <person name="Ng P."/>
            <person name="Nilsson R."/>
            <person name="Nishiguchi S."/>
            <person name="Nishikawa S."/>
            <person name="Nori F."/>
            <person name="Ohara O."/>
            <person name="Okazaki Y."/>
            <person name="Orlando V."/>
            <person name="Pang K.C."/>
            <person name="Pavan W.J."/>
            <person name="Pavesi G."/>
            <person name="Pesole G."/>
            <person name="Petrovsky N."/>
            <person name="Piazza S."/>
            <person name="Reed J."/>
            <person name="Reid J.F."/>
            <person name="Ring B.Z."/>
            <person name="Ringwald M."/>
            <person name="Rost B."/>
            <person name="Ruan Y."/>
            <person name="Salzberg S.L."/>
            <person name="Sandelin A."/>
            <person name="Schneider C."/>
            <person name="Schoenbach C."/>
            <person name="Sekiguchi K."/>
            <person name="Semple C.A."/>
            <person name="Seno S."/>
            <person name="Sessa L."/>
            <person name="Sheng Y."/>
            <person name="Shibata Y."/>
            <person name="Shimada H."/>
            <person name="Shimada K."/>
            <person name="Silva D."/>
            <person name="Sinclair B."/>
            <person name="Sperling S."/>
            <person name="Stupka E."/>
            <person name="Sugiura K."/>
            <person name="Sultana R."/>
            <person name="Takenaka Y."/>
            <person name="Taki K."/>
            <person name="Tammoja K."/>
            <person name="Tan S.L."/>
            <person name="Tang S."/>
            <person name="Taylor M.S."/>
            <person name="Tegner J."/>
            <person name="Teichmann S.A."/>
            <person name="Ueda H.R."/>
            <person name="van Nimwegen E."/>
            <person name="Verardo R."/>
            <person name="Wei C.L."/>
            <person name="Yagi K."/>
            <person name="Yamanishi H."/>
            <person name="Zabarovsky E."/>
            <person name="Zhu S."/>
            <person name="Zimmer A."/>
            <person name="Hide W."/>
            <person name="Bult C."/>
            <person name="Grimmond S.M."/>
            <person name="Teasdale R.D."/>
            <person name="Liu E.T."/>
            <person name="Brusic V."/>
            <person name="Quackenbush J."/>
            <person name="Wahlestedt C."/>
            <person name="Mattick J.S."/>
            <person name="Hume D.A."/>
            <person name="Kai C."/>
            <person name="Sasaki D."/>
            <person name="Tomaru Y."/>
            <person name="Fukuda S."/>
            <person name="Kanamori-Katayama M."/>
            <person name="Suzuki M."/>
            <person name="Aoki J."/>
            <person name="Arakawa T."/>
            <person name="Iida J."/>
            <person name="Imamura K."/>
            <person name="Itoh M."/>
            <person name="Kato T."/>
            <person name="Kawaji H."/>
            <person name="Kawagashira N."/>
            <person name="Kawashima T."/>
            <person name="Kojima M."/>
            <person name="Kondo S."/>
            <person name="Konno H."/>
            <person name="Nakano K."/>
            <person name="Ninomiya N."/>
            <person name="Nishio T."/>
            <person name="Okada M."/>
            <person name="Plessy C."/>
            <person name="Shibata K."/>
            <person name="Shiraki T."/>
            <person name="Suzuki S."/>
            <person name="Tagami M."/>
            <person name="Waki K."/>
            <person name="Watahiki A."/>
            <person name="Okamura-Oho Y."/>
            <person name="Suzuki H."/>
            <person name="Kawai J."/>
            <person name="Hayashizaki Y."/>
        </authorList>
    </citation>
    <scope>NUCLEOTIDE SEQUENCE [LARGE SCALE MRNA]</scope>
    <source>
        <strain>C57BL/6J</strain>
        <tissue>Embryo</tissue>
    </source>
</reference>
<reference key="2">
    <citation type="journal article" date="2004" name="Genome Res.">
        <title>The status, quality, and expansion of the NIH full-length cDNA project: the Mammalian Gene Collection (MGC).</title>
        <authorList>
            <consortium name="The MGC Project Team"/>
        </authorList>
    </citation>
    <scope>NUCLEOTIDE SEQUENCE [LARGE SCALE MRNA]</scope>
    <source>
        <strain>FVB/N</strain>
        <tissue>Mammary gland</tissue>
    </source>
</reference>
<reference key="3">
    <citation type="submission" date="1999-11" db="EMBL/GenBank/DDBJ databases">
        <title>Another gene for tRNA-guanine transglycosylase in mammals.</title>
        <authorList>
            <person name="Morishita T."/>
            <person name="Hidaka T."/>
        </authorList>
    </citation>
    <scope>NUCLEOTIDE SEQUENCE [MRNA] OF 17-403</scope>
    <source>
        <tissue>Brain</tissue>
    </source>
</reference>
<reference key="4">
    <citation type="journal article" date="2009" name="J. Biol. Chem.">
        <title>Queuosine formation in eukaryotic tRNA occurs via a mitochondria-localized heteromeric transglycosylase.</title>
        <authorList>
            <person name="Boland C."/>
            <person name="Hayes P."/>
            <person name="Santa-Maria I."/>
            <person name="Nishimura S."/>
            <person name="Kelly V.P."/>
        </authorList>
    </citation>
    <scope>FUNCTION</scope>
    <scope>CATALYTIC ACTIVITY</scope>
    <scope>INTERACTION WITH QTRT2</scope>
    <scope>SUBCELLULAR LOCATION</scope>
    <scope>TISSUE SPECIFICITY</scope>
</reference>
<reference key="5">
    <citation type="journal article" date="2010" name="Cell">
        <title>A tissue-specific atlas of mouse protein phosphorylation and expression.</title>
        <authorList>
            <person name="Huttlin E.L."/>
            <person name="Jedrychowski M.P."/>
            <person name="Elias J.E."/>
            <person name="Goswami T."/>
            <person name="Rad R."/>
            <person name="Beausoleil S.A."/>
            <person name="Villen J."/>
            <person name="Haas W."/>
            <person name="Sowa M.E."/>
            <person name="Gygi S.P."/>
        </authorList>
    </citation>
    <scope>IDENTIFICATION BY MASS SPECTROMETRY [LARGE SCALE ANALYSIS]</scope>
    <source>
        <tissue>Brain</tissue>
        <tissue>Spleen</tissue>
        <tissue>Testis</tissue>
    </source>
</reference>
<reference key="6">
    <citation type="journal article" date="2018" name="Biochemistry">
        <title>Homodimer Architecture of QTRT2, the Noncatalytic Subunit of the Eukaryotic tRNA-Guanine Transglycosylase.</title>
        <authorList>
            <person name="Behrens C."/>
            <person name="Biela I."/>
            <person name="Petiot-Becard S."/>
            <person name="Botzanowski T."/>
            <person name="Cianferani S."/>
            <person name="Sager C.P."/>
            <person name="Klebe G."/>
            <person name="Heine A."/>
            <person name="Reuter K."/>
        </authorList>
    </citation>
    <scope>FUNCTION</scope>
    <scope>CATALYTIC ACTIVITY</scope>
    <scope>SUBUNIT</scope>
</reference>
<reference key="7">
    <citation type="journal article" date="2023" name="EMBO J.">
        <title>Queuosine-tRNA promotes sex-dependent learning and memory formation by maintaining codon-biased translation elongation speed.</title>
        <authorList>
            <person name="Cirzi C."/>
            <person name="Dyckow J."/>
            <person name="Legrand C."/>
            <person name="Schott J."/>
            <person name="Guo W."/>
            <person name="Perez Hernandez D."/>
            <person name="Hisaoka M."/>
            <person name="Parlato R."/>
            <person name="Pitzer C."/>
            <person name="van der Hoeven F."/>
            <person name="Dittmar G."/>
            <person name="Helm M."/>
            <person name="Stoecklin G."/>
            <person name="Schirmer L."/>
            <person name="Lyko F."/>
            <person name="Tuorto F."/>
        </authorList>
    </citation>
    <scope>FUNCTION</scope>
    <scope>DISRUPTION PHENOTYPE</scope>
</reference>
<reference evidence="9 10 11 12 13 14" key="8">
    <citation type="journal article" date="2022" name="ACS Chem. Biol.">
        <title>Structural and biochemical investigation of the heterodimeric murine tRNA-guanine transglycosylase.</title>
        <authorList>
            <person name="Sebastiani M."/>
            <person name="Behrens C."/>
            <person name="Doerr S."/>
            <person name="Gerber H.D."/>
            <person name="Benazza R."/>
            <person name="Hernandez-Alba O."/>
            <person name="Cianferani S."/>
            <person name="Klebe G."/>
            <person name="Heine A."/>
            <person name="Reuter K."/>
        </authorList>
    </citation>
    <scope>X-RAY CRYSTALLOGRAPHY (1.65 ANGSTROMS) OF 11-403 IN COMPLEX WITH QUEUINE; ZINC AND QTRT2</scope>
    <scope>FUNCTION</scope>
    <scope>CATALYTIC ACTIVITY</scope>
    <scope>BIOPHYSICOCHEMICAL PROPERTIES</scope>
    <scope>COFACTOR</scope>
    <scope>SUBUNIT</scope>
</reference>